<keyword id="KW-0030">Aminoacyl-tRNA synthetase</keyword>
<keyword id="KW-0067">ATP-binding</keyword>
<keyword id="KW-0963">Cytoplasm</keyword>
<keyword id="KW-0436">Ligase</keyword>
<keyword id="KW-0547">Nucleotide-binding</keyword>
<keyword id="KW-0648">Protein biosynthesis</keyword>
<proteinExistence type="inferred from homology"/>
<name>SYQ_POLNS</name>
<accession>B1XW11</accession>
<sequence>MSQDSKPSKANAGAVVEPSNFLRQIIDHDLASGAFSQRTNLAGEAIPSIITRFPPEPNGYLHIGHAKSICLNFGLASDYNNQPGGARCNMRLDDTNPVKEDVEYADSILDAVKWLGFDWGTHLYHASDYFDRLYEFAEILIQSGKAYVDSQSADDIHTNRGNFGQAGKNSPFRDRTPEENLQLFRDMRDGKFKDGEHVLRLKIDMAHPNIVMRDPVVYRIRHTDHHRTGSKWCIYPLYDFTHCISDALENISHSICTLEFENNRPLYDWIVNSLKELGVFKDPVPHQHEFARLNLTYTITSKRKLLQLVEEKHVEGWDDPRMPTIVGIRRRGYTPESIRLFCERIGVSKADSWIDMSTLDQALRDDLEVRAPRATAVLKPLKLVVENFDAPTKEACSAPRHPNYPEWGNREFNFTRELWIEADDFMQEPIKGFFRLYPPIDDQPGSRVRLRHGFVVECTGFETDAQGNVTQVNVTHFPDSKSGTPGSNNYKVKGNIHWISAAEAIPAEVRLYDHLFTDPYPDSGDKNFLDAINPNSKQTISAYLEPCMKDAKAEDRFQFERHGYFVADQSDSKPGKPIFNRAVGLKDSWK</sequence>
<protein>
    <recommendedName>
        <fullName evidence="1">Glutamine--tRNA ligase</fullName>
        <ecNumber evidence="1">6.1.1.18</ecNumber>
    </recommendedName>
    <alternativeName>
        <fullName evidence="1">Glutaminyl-tRNA synthetase</fullName>
        <shortName evidence="1">GlnRS</shortName>
    </alternativeName>
</protein>
<evidence type="ECO:0000255" key="1">
    <source>
        <dbReference type="HAMAP-Rule" id="MF_00126"/>
    </source>
</evidence>
<organism>
    <name type="scientific">Polynucleobacter necessarius subsp. necessarius (strain STIR1)</name>
    <dbReference type="NCBI Taxonomy" id="452638"/>
    <lineage>
        <taxon>Bacteria</taxon>
        <taxon>Pseudomonadati</taxon>
        <taxon>Pseudomonadota</taxon>
        <taxon>Betaproteobacteria</taxon>
        <taxon>Burkholderiales</taxon>
        <taxon>Burkholderiaceae</taxon>
        <taxon>Polynucleobacter</taxon>
    </lineage>
</organism>
<dbReference type="EC" id="6.1.1.18" evidence="1"/>
<dbReference type="EMBL" id="CP001010">
    <property type="protein sequence ID" value="ACB44538.1"/>
    <property type="molecule type" value="Genomic_DNA"/>
</dbReference>
<dbReference type="SMR" id="B1XW11"/>
<dbReference type="STRING" id="452638.Pnec_1440"/>
<dbReference type="KEGG" id="pne:Pnec_1440"/>
<dbReference type="eggNOG" id="COG0008">
    <property type="taxonomic scope" value="Bacteria"/>
</dbReference>
<dbReference type="HOGENOM" id="CLU_001882_2_3_4"/>
<dbReference type="OrthoDB" id="9801560at2"/>
<dbReference type="GO" id="GO:0005829">
    <property type="term" value="C:cytosol"/>
    <property type="evidence" value="ECO:0007669"/>
    <property type="project" value="TreeGrafter"/>
</dbReference>
<dbReference type="GO" id="GO:0005524">
    <property type="term" value="F:ATP binding"/>
    <property type="evidence" value="ECO:0007669"/>
    <property type="project" value="UniProtKB-UniRule"/>
</dbReference>
<dbReference type="GO" id="GO:0004819">
    <property type="term" value="F:glutamine-tRNA ligase activity"/>
    <property type="evidence" value="ECO:0007669"/>
    <property type="project" value="UniProtKB-UniRule"/>
</dbReference>
<dbReference type="GO" id="GO:0006425">
    <property type="term" value="P:glutaminyl-tRNA aminoacylation"/>
    <property type="evidence" value="ECO:0007669"/>
    <property type="project" value="InterPro"/>
</dbReference>
<dbReference type="GO" id="GO:0006424">
    <property type="term" value="P:glutamyl-tRNA aminoacylation"/>
    <property type="evidence" value="ECO:0007669"/>
    <property type="project" value="UniProtKB-UniRule"/>
</dbReference>
<dbReference type="CDD" id="cd00807">
    <property type="entry name" value="GlnRS_core"/>
    <property type="match status" value="1"/>
</dbReference>
<dbReference type="FunFam" id="1.10.1160.10:FF:000001">
    <property type="entry name" value="Glutamine--tRNA ligase"/>
    <property type="match status" value="1"/>
</dbReference>
<dbReference type="FunFam" id="3.90.800.10:FF:000001">
    <property type="entry name" value="Glutamine--tRNA ligase"/>
    <property type="match status" value="1"/>
</dbReference>
<dbReference type="FunFam" id="3.40.50.620:FF:000037">
    <property type="entry name" value="Glutamine--tRNA ligase cytoplasmic"/>
    <property type="match status" value="1"/>
</dbReference>
<dbReference type="Gene3D" id="1.10.1160.10">
    <property type="entry name" value="Glutamyl-trna Synthetase, Domain 2"/>
    <property type="match status" value="1"/>
</dbReference>
<dbReference type="Gene3D" id="3.90.800.10">
    <property type="entry name" value="Glutamyl-tRNA Synthetase, Domain 3"/>
    <property type="match status" value="1"/>
</dbReference>
<dbReference type="Gene3D" id="3.40.50.620">
    <property type="entry name" value="HUPs"/>
    <property type="match status" value="1"/>
</dbReference>
<dbReference type="Gene3D" id="2.40.240.10">
    <property type="entry name" value="Ribosomal Protein L25, Chain P"/>
    <property type="match status" value="2"/>
</dbReference>
<dbReference type="HAMAP" id="MF_00126">
    <property type="entry name" value="Gln_tRNA_synth"/>
    <property type="match status" value="1"/>
</dbReference>
<dbReference type="InterPro" id="IPR001412">
    <property type="entry name" value="aa-tRNA-synth_I_CS"/>
</dbReference>
<dbReference type="InterPro" id="IPR004514">
    <property type="entry name" value="Gln-tRNA-synth"/>
</dbReference>
<dbReference type="InterPro" id="IPR050132">
    <property type="entry name" value="Gln/Glu-tRNA_Ligase"/>
</dbReference>
<dbReference type="InterPro" id="IPR022861">
    <property type="entry name" value="Gln_tRNA_ligase_bac"/>
</dbReference>
<dbReference type="InterPro" id="IPR020058">
    <property type="entry name" value="Glu/Gln-tRNA-synth_Ib_cat-dom"/>
</dbReference>
<dbReference type="InterPro" id="IPR020059">
    <property type="entry name" value="Glu/Gln-tRNA-synth_Ib_codon-bd"/>
</dbReference>
<dbReference type="InterPro" id="IPR020061">
    <property type="entry name" value="Glu_tRNA_lig_a-bdl"/>
</dbReference>
<dbReference type="InterPro" id="IPR020056">
    <property type="entry name" value="Rbsml_bL25/Gln-tRNA_synth_N"/>
</dbReference>
<dbReference type="InterPro" id="IPR011035">
    <property type="entry name" value="Ribosomal_bL25/Gln-tRNA_synth"/>
</dbReference>
<dbReference type="InterPro" id="IPR014729">
    <property type="entry name" value="Rossmann-like_a/b/a_fold"/>
</dbReference>
<dbReference type="InterPro" id="IPR049437">
    <property type="entry name" value="tRNA-synt_1c_C2"/>
</dbReference>
<dbReference type="NCBIfam" id="TIGR00440">
    <property type="entry name" value="glnS"/>
    <property type="match status" value="1"/>
</dbReference>
<dbReference type="NCBIfam" id="NF011291">
    <property type="entry name" value="PRK14703.1"/>
    <property type="match status" value="1"/>
</dbReference>
<dbReference type="PANTHER" id="PTHR43097:SF5">
    <property type="entry name" value="GLUTAMATE--TRNA LIGASE"/>
    <property type="match status" value="1"/>
</dbReference>
<dbReference type="PANTHER" id="PTHR43097">
    <property type="entry name" value="GLUTAMINE-TRNA LIGASE"/>
    <property type="match status" value="1"/>
</dbReference>
<dbReference type="Pfam" id="PF00749">
    <property type="entry name" value="tRNA-synt_1c"/>
    <property type="match status" value="1"/>
</dbReference>
<dbReference type="Pfam" id="PF03950">
    <property type="entry name" value="tRNA-synt_1c_C"/>
    <property type="match status" value="1"/>
</dbReference>
<dbReference type="Pfam" id="PF20974">
    <property type="entry name" value="tRNA-synt_1c_C2"/>
    <property type="match status" value="1"/>
</dbReference>
<dbReference type="SUPFAM" id="SSF52374">
    <property type="entry name" value="Nucleotidylyl transferase"/>
    <property type="match status" value="1"/>
</dbReference>
<dbReference type="SUPFAM" id="SSF50715">
    <property type="entry name" value="Ribosomal protein L25-like"/>
    <property type="match status" value="1"/>
</dbReference>
<dbReference type="PROSITE" id="PS00178">
    <property type="entry name" value="AA_TRNA_LIGASE_I"/>
    <property type="match status" value="1"/>
</dbReference>
<reference key="1">
    <citation type="journal article" date="2013" name="Proc. Natl. Acad. Sci. U.S.A.">
        <title>Polynucleobacter necessarius, a model for genome reduction in both free-living and symbiotic bacteria.</title>
        <authorList>
            <person name="Boscaro V."/>
            <person name="Felletti M."/>
            <person name="Vannini C."/>
            <person name="Ackerman M.S."/>
            <person name="Chain P.S."/>
            <person name="Malfatti S."/>
            <person name="Vergez L.M."/>
            <person name="Shin M."/>
            <person name="Doak T.G."/>
            <person name="Lynch M."/>
            <person name="Petroni G."/>
        </authorList>
    </citation>
    <scope>NUCLEOTIDE SEQUENCE [LARGE SCALE GENOMIC DNA]</scope>
    <source>
        <strain>STIR1</strain>
    </source>
</reference>
<feature type="chain" id="PRO_1000095496" description="Glutamine--tRNA ligase">
    <location>
        <begin position="1"/>
        <end position="590"/>
    </location>
</feature>
<feature type="short sequence motif" description="'HIGH' region" evidence="1">
    <location>
        <begin position="55"/>
        <end position="65"/>
    </location>
</feature>
<feature type="short sequence motif" description="'KMSKS' region" evidence="1">
    <location>
        <begin position="299"/>
        <end position="303"/>
    </location>
</feature>
<feature type="binding site" evidence="1">
    <location>
        <begin position="56"/>
        <end position="58"/>
    </location>
    <ligand>
        <name>ATP</name>
        <dbReference type="ChEBI" id="CHEBI:30616"/>
    </ligand>
</feature>
<feature type="binding site" evidence="1">
    <location>
        <begin position="62"/>
        <end position="68"/>
    </location>
    <ligand>
        <name>ATP</name>
        <dbReference type="ChEBI" id="CHEBI:30616"/>
    </ligand>
</feature>
<feature type="binding site" evidence="1">
    <location>
        <position position="93"/>
    </location>
    <ligand>
        <name>L-glutamine</name>
        <dbReference type="ChEBI" id="CHEBI:58359"/>
    </ligand>
</feature>
<feature type="binding site" evidence="1">
    <location>
        <position position="238"/>
    </location>
    <ligand>
        <name>L-glutamine</name>
        <dbReference type="ChEBI" id="CHEBI:58359"/>
    </ligand>
</feature>
<feature type="binding site" evidence="1">
    <location>
        <position position="257"/>
    </location>
    <ligand>
        <name>ATP</name>
        <dbReference type="ChEBI" id="CHEBI:30616"/>
    </ligand>
</feature>
<feature type="binding site" evidence="1">
    <location>
        <begin position="292"/>
        <end position="293"/>
    </location>
    <ligand>
        <name>ATP</name>
        <dbReference type="ChEBI" id="CHEBI:30616"/>
    </ligand>
</feature>
<gene>
    <name evidence="1" type="primary">glnS</name>
    <name type="ordered locus">Pnec_1440</name>
</gene>
<comment type="catalytic activity">
    <reaction evidence="1">
        <text>tRNA(Gln) + L-glutamine + ATP = L-glutaminyl-tRNA(Gln) + AMP + diphosphate</text>
        <dbReference type="Rhea" id="RHEA:20121"/>
        <dbReference type="Rhea" id="RHEA-COMP:9662"/>
        <dbReference type="Rhea" id="RHEA-COMP:9681"/>
        <dbReference type="ChEBI" id="CHEBI:30616"/>
        <dbReference type="ChEBI" id="CHEBI:33019"/>
        <dbReference type="ChEBI" id="CHEBI:58359"/>
        <dbReference type="ChEBI" id="CHEBI:78442"/>
        <dbReference type="ChEBI" id="CHEBI:78521"/>
        <dbReference type="ChEBI" id="CHEBI:456215"/>
        <dbReference type="EC" id="6.1.1.18"/>
    </reaction>
</comment>
<comment type="subunit">
    <text evidence="1">Monomer.</text>
</comment>
<comment type="subcellular location">
    <subcellularLocation>
        <location evidence="1">Cytoplasm</location>
    </subcellularLocation>
</comment>
<comment type="similarity">
    <text evidence="1">Belongs to the class-I aminoacyl-tRNA synthetase family.</text>
</comment>